<reference key="1">
    <citation type="journal article" date="2000" name="Nature">
        <title>Sequence and analysis of chromosome 1 of the plant Arabidopsis thaliana.</title>
        <authorList>
            <person name="Theologis A."/>
            <person name="Ecker J.R."/>
            <person name="Palm C.J."/>
            <person name="Federspiel N.A."/>
            <person name="Kaul S."/>
            <person name="White O."/>
            <person name="Alonso J."/>
            <person name="Altafi H."/>
            <person name="Araujo R."/>
            <person name="Bowman C.L."/>
            <person name="Brooks S.Y."/>
            <person name="Buehler E."/>
            <person name="Chan A."/>
            <person name="Chao Q."/>
            <person name="Chen H."/>
            <person name="Cheuk R.F."/>
            <person name="Chin C.W."/>
            <person name="Chung M.K."/>
            <person name="Conn L."/>
            <person name="Conway A.B."/>
            <person name="Conway A.R."/>
            <person name="Creasy T.H."/>
            <person name="Dewar K."/>
            <person name="Dunn P."/>
            <person name="Etgu P."/>
            <person name="Feldblyum T.V."/>
            <person name="Feng J.-D."/>
            <person name="Fong B."/>
            <person name="Fujii C.Y."/>
            <person name="Gill J.E."/>
            <person name="Goldsmith A.D."/>
            <person name="Haas B."/>
            <person name="Hansen N.F."/>
            <person name="Hughes B."/>
            <person name="Huizar L."/>
            <person name="Hunter J.L."/>
            <person name="Jenkins J."/>
            <person name="Johnson-Hopson C."/>
            <person name="Khan S."/>
            <person name="Khaykin E."/>
            <person name="Kim C.J."/>
            <person name="Koo H.L."/>
            <person name="Kremenetskaia I."/>
            <person name="Kurtz D.B."/>
            <person name="Kwan A."/>
            <person name="Lam B."/>
            <person name="Langin-Hooper S."/>
            <person name="Lee A."/>
            <person name="Lee J.M."/>
            <person name="Lenz C.A."/>
            <person name="Li J.H."/>
            <person name="Li Y.-P."/>
            <person name="Lin X."/>
            <person name="Liu S.X."/>
            <person name="Liu Z.A."/>
            <person name="Luros J.S."/>
            <person name="Maiti R."/>
            <person name="Marziali A."/>
            <person name="Militscher J."/>
            <person name="Miranda M."/>
            <person name="Nguyen M."/>
            <person name="Nierman W.C."/>
            <person name="Osborne B.I."/>
            <person name="Pai G."/>
            <person name="Peterson J."/>
            <person name="Pham P.K."/>
            <person name="Rizzo M."/>
            <person name="Rooney T."/>
            <person name="Rowley D."/>
            <person name="Sakano H."/>
            <person name="Salzberg S.L."/>
            <person name="Schwartz J.R."/>
            <person name="Shinn P."/>
            <person name="Southwick A.M."/>
            <person name="Sun H."/>
            <person name="Tallon L.J."/>
            <person name="Tambunga G."/>
            <person name="Toriumi M.J."/>
            <person name="Town C.D."/>
            <person name="Utterback T."/>
            <person name="Van Aken S."/>
            <person name="Vaysberg M."/>
            <person name="Vysotskaia V.S."/>
            <person name="Walker M."/>
            <person name="Wu D."/>
            <person name="Yu G."/>
            <person name="Fraser C.M."/>
            <person name="Venter J.C."/>
            <person name="Davis R.W."/>
        </authorList>
    </citation>
    <scope>NUCLEOTIDE SEQUENCE [LARGE SCALE GENOMIC DNA]</scope>
    <source>
        <strain>cv. Columbia</strain>
    </source>
</reference>
<reference key="2">
    <citation type="journal article" date="2017" name="Plant J.">
        <title>Araport11: a complete reannotation of the Arabidopsis thaliana reference genome.</title>
        <authorList>
            <person name="Cheng C.Y."/>
            <person name="Krishnakumar V."/>
            <person name="Chan A.P."/>
            <person name="Thibaud-Nissen F."/>
            <person name="Schobel S."/>
            <person name="Town C.D."/>
        </authorList>
    </citation>
    <scope>GENOME REANNOTATION</scope>
    <source>
        <strain>cv. Columbia</strain>
    </source>
</reference>
<reference key="3">
    <citation type="journal article" date="2003" name="Science">
        <title>Empirical analysis of transcriptional activity in the Arabidopsis genome.</title>
        <authorList>
            <person name="Yamada K."/>
            <person name="Lim J."/>
            <person name="Dale J.M."/>
            <person name="Chen H."/>
            <person name="Shinn P."/>
            <person name="Palm C.J."/>
            <person name="Southwick A.M."/>
            <person name="Wu H.C."/>
            <person name="Kim C.J."/>
            <person name="Nguyen M."/>
            <person name="Pham P.K."/>
            <person name="Cheuk R.F."/>
            <person name="Karlin-Newmann G."/>
            <person name="Liu S.X."/>
            <person name="Lam B."/>
            <person name="Sakano H."/>
            <person name="Wu T."/>
            <person name="Yu G."/>
            <person name="Miranda M."/>
            <person name="Quach H.L."/>
            <person name="Tripp M."/>
            <person name="Chang C.H."/>
            <person name="Lee J.M."/>
            <person name="Toriumi M.J."/>
            <person name="Chan M.M."/>
            <person name="Tang C.C."/>
            <person name="Onodera C.S."/>
            <person name="Deng J.M."/>
            <person name="Akiyama K."/>
            <person name="Ansari Y."/>
            <person name="Arakawa T."/>
            <person name="Banh J."/>
            <person name="Banno F."/>
            <person name="Bowser L."/>
            <person name="Brooks S.Y."/>
            <person name="Carninci P."/>
            <person name="Chao Q."/>
            <person name="Choy N."/>
            <person name="Enju A."/>
            <person name="Goldsmith A.D."/>
            <person name="Gurjal M."/>
            <person name="Hansen N.F."/>
            <person name="Hayashizaki Y."/>
            <person name="Johnson-Hopson C."/>
            <person name="Hsuan V.W."/>
            <person name="Iida K."/>
            <person name="Karnes M."/>
            <person name="Khan S."/>
            <person name="Koesema E."/>
            <person name="Ishida J."/>
            <person name="Jiang P.X."/>
            <person name="Jones T."/>
            <person name="Kawai J."/>
            <person name="Kamiya A."/>
            <person name="Meyers C."/>
            <person name="Nakajima M."/>
            <person name="Narusaka M."/>
            <person name="Seki M."/>
            <person name="Sakurai T."/>
            <person name="Satou M."/>
            <person name="Tamse R."/>
            <person name="Vaysberg M."/>
            <person name="Wallender E.K."/>
            <person name="Wong C."/>
            <person name="Yamamura Y."/>
            <person name="Yuan S."/>
            <person name="Shinozaki K."/>
            <person name="Davis R.W."/>
            <person name="Theologis A."/>
            <person name="Ecker J.R."/>
        </authorList>
    </citation>
    <scope>NUCLEOTIDE SEQUENCE [LARGE SCALE MRNA]</scope>
    <source>
        <strain>cv. Columbia</strain>
    </source>
</reference>
<reference key="4">
    <citation type="journal article" date="2012" name="Nature">
        <title>A novel putative auxin carrier family regulates intracellular auxin homeostasis in plants.</title>
        <authorList>
            <person name="Barbez E."/>
            <person name="Kubes M."/>
            <person name="Rolcik J."/>
            <person name="Beziat C."/>
            <person name="Pencik A."/>
            <person name="Wang B."/>
            <person name="Rosquete M.R."/>
            <person name="Zhu J."/>
            <person name="Dobrev P.I."/>
            <person name="Lee Y."/>
            <person name="Zazimalova E."/>
            <person name="Petrasek J."/>
            <person name="Geisler M."/>
            <person name="Friml J."/>
            <person name="Kleine-Vehn J."/>
        </authorList>
    </citation>
    <scope>FUNCTION</scope>
    <scope>TISSUE SPECIFICITY</scope>
    <scope>INDUCTION BY AUXIN</scope>
    <scope>GENE FAMILY</scope>
    <scope>NOMENCLATURE</scope>
    <scope>DISRUPTION PHENOTYPE</scope>
    <scope>SUBCELLULAR LOCATION</scope>
</reference>
<reference key="5">
    <citation type="journal article" date="2012" name="Front. Plant Sci.">
        <title>Evolution and structural diversification of PILS putative auxin carriers in plants.</title>
        <authorList>
            <person name="Feraru E."/>
            <person name="Vosolsobe S."/>
            <person name="Feraru M.I."/>
            <person name="Petrasek J."/>
            <person name="Kleine-Vehn J."/>
        </authorList>
    </citation>
    <scope>GENE FAMILY</scope>
    <scope>NOMENCLATURE</scope>
</reference>
<organism>
    <name type="scientific">Arabidopsis thaliana</name>
    <name type="common">Mouse-ear cress</name>
    <dbReference type="NCBI Taxonomy" id="3702"/>
    <lineage>
        <taxon>Eukaryota</taxon>
        <taxon>Viridiplantae</taxon>
        <taxon>Streptophyta</taxon>
        <taxon>Embryophyta</taxon>
        <taxon>Tracheophyta</taxon>
        <taxon>Spermatophyta</taxon>
        <taxon>Magnoliopsida</taxon>
        <taxon>eudicotyledons</taxon>
        <taxon>Gunneridae</taxon>
        <taxon>Pentapetalae</taxon>
        <taxon>rosids</taxon>
        <taxon>malvids</taxon>
        <taxon>Brassicales</taxon>
        <taxon>Brassicaceae</taxon>
        <taxon>Camelineae</taxon>
        <taxon>Arabidopsis</taxon>
    </lineage>
</organism>
<feature type="chain" id="PRO_0000436497" description="Protein PIN-LIKES 2">
    <location>
        <begin position="1"/>
        <end position="457"/>
    </location>
</feature>
<feature type="topological domain" description="Lumenal" evidence="5">
    <location>
        <begin position="1"/>
        <end position="15"/>
    </location>
</feature>
<feature type="transmembrane region" description="Helical" evidence="1">
    <location>
        <begin position="16"/>
        <end position="36"/>
    </location>
</feature>
<feature type="topological domain" description="Cytoplasmic" evidence="5">
    <location>
        <begin position="37"/>
        <end position="54"/>
    </location>
</feature>
<feature type="transmembrane region" description="Helical" evidence="1">
    <location>
        <begin position="55"/>
        <end position="75"/>
    </location>
</feature>
<feature type="topological domain" description="Lumenal" evidence="5">
    <location>
        <begin position="76"/>
        <end position="85"/>
    </location>
</feature>
<feature type="transmembrane region" description="Helical" evidence="1">
    <location>
        <begin position="86"/>
        <end position="106"/>
    </location>
</feature>
<feature type="topological domain" description="Cytoplasmic" evidence="5">
    <location>
        <begin position="107"/>
        <end position="116"/>
    </location>
</feature>
<feature type="transmembrane region" description="Helical" evidence="1">
    <location>
        <begin position="117"/>
        <end position="137"/>
    </location>
</feature>
<feature type="topological domain" description="Lumenal" evidence="5">
    <location>
        <begin position="138"/>
        <end position="151"/>
    </location>
</feature>
<feature type="transmembrane region" description="Helical" evidence="1">
    <location>
        <begin position="152"/>
        <end position="172"/>
    </location>
</feature>
<feature type="topological domain" description="Cytoplasmic" evidence="5">
    <location>
        <begin position="173"/>
        <end position="291"/>
    </location>
</feature>
<feature type="transmembrane region" description="Helical" evidence="1">
    <location>
        <begin position="292"/>
        <end position="312"/>
    </location>
</feature>
<feature type="topological domain" description="Lumenal" evidence="5">
    <location>
        <begin position="313"/>
        <end position="322"/>
    </location>
</feature>
<feature type="transmembrane region" description="Helical" evidence="1">
    <location>
        <begin position="323"/>
        <end position="343"/>
    </location>
</feature>
<feature type="topological domain" description="Cytoplasmic" evidence="5">
    <location>
        <begin position="344"/>
        <end position="356"/>
    </location>
</feature>
<feature type="transmembrane region" description="Helical" evidence="1">
    <location>
        <begin position="357"/>
        <end position="377"/>
    </location>
</feature>
<feature type="topological domain" description="Lumenal" evidence="5">
    <location>
        <begin position="378"/>
        <end position="393"/>
    </location>
</feature>
<feature type="transmembrane region" description="Helical" evidence="1">
    <location>
        <begin position="394"/>
        <end position="414"/>
    </location>
</feature>
<feature type="topological domain" description="Cytoplasmic" evidence="5">
    <location>
        <begin position="415"/>
        <end position="424"/>
    </location>
</feature>
<feature type="transmembrane region" description="Helical" evidence="1">
    <location>
        <begin position="425"/>
        <end position="445"/>
    </location>
</feature>
<feature type="topological domain" description="Lumenal" evidence="5">
    <location>
        <begin position="446"/>
        <end position="457"/>
    </location>
</feature>
<proteinExistence type="evidence at transcript level"/>
<gene>
    <name evidence="3" type="primary">PILS2</name>
    <name evidence="6" type="ordered locus">At1g71090</name>
    <name evidence="7" type="ORF">F23N20.8</name>
</gene>
<dbReference type="EMBL" id="AC016972">
    <property type="protein sequence ID" value="AAG51701.1"/>
    <property type="molecule type" value="Genomic_DNA"/>
</dbReference>
<dbReference type="EMBL" id="CP002684">
    <property type="protein sequence ID" value="AEE35160.1"/>
    <property type="molecule type" value="Genomic_DNA"/>
</dbReference>
<dbReference type="EMBL" id="AY045993">
    <property type="protein sequence ID" value="AAK76667.1"/>
    <property type="molecule type" value="mRNA"/>
</dbReference>
<dbReference type="EMBL" id="AY079375">
    <property type="protein sequence ID" value="AAL85106.1"/>
    <property type="molecule type" value="mRNA"/>
</dbReference>
<dbReference type="PIR" id="D96735">
    <property type="entry name" value="D96735"/>
</dbReference>
<dbReference type="RefSeq" id="NP_565011.1">
    <property type="nucleotide sequence ID" value="NM_105778.2"/>
</dbReference>
<dbReference type="SMR" id="Q9C999"/>
<dbReference type="FunCoup" id="Q9C999">
    <property type="interactions" value="461"/>
</dbReference>
<dbReference type="IntAct" id="Q9C999">
    <property type="interactions" value="1"/>
</dbReference>
<dbReference type="STRING" id="3702.Q9C999"/>
<dbReference type="iPTMnet" id="Q9C999"/>
<dbReference type="PaxDb" id="3702-AT1G71090.1"/>
<dbReference type="ProteomicsDB" id="236161"/>
<dbReference type="EnsemblPlants" id="AT1G71090.1">
    <property type="protein sequence ID" value="AT1G71090.1"/>
    <property type="gene ID" value="AT1G71090"/>
</dbReference>
<dbReference type="GeneID" id="843449"/>
<dbReference type="Gramene" id="AT1G71090.1">
    <property type="protein sequence ID" value="AT1G71090.1"/>
    <property type="gene ID" value="AT1G71090"/>
</dbReference>
<dbReference type="KEGG" id="ath:AT1G71090"/>
<dbReference type="Araport" id="AT1G71090"/>
<dbReference type="TAIR" id="AT1G71090">
    <property type="gene designation" value="PILS2"/>
</dbReference>
<dbReference type="eggNOG" id="KOG2722">
    <property type="taxonomic scope" value="Eukaryota"/>
</dbReference>
<dbReference type="HOGENOM" id="CLU_044945_2_0_1"/>
<dbReference type="InParanoid" id="Q9C999"/>
<dbReference type="OMA" id="WSWGYHI"/>
<dbReference type="OrthoDB" id="191139at2759"/>
<dbReference type="PhylomeDB" id="Q9C999"/>
<dbReference type="PRO" id="PR:Q9C999"/>
<dbReference type="Proteomes" id="UP000006548">
    <property type="component" value="Chromosome 1"/>
</dbReference>
<dbReference type="ExpressionAtlas" id="Q9C999">
    <property type="expression patterns" value="baseline and differential"/>
</dbReference>
<dbReference type="GO" id="GO:0005789">
    <property type="term" value="C:endoplasmic reticulum membrane"/>
    <property type="evidence" value="ECO:0000314"/>
    <property type="project" value="UniProtKB"/>
</dbReference>
<dbReference type="GO" id="GO:0010329">
    <property type="term" value="F:auxin efflux transmembrane transporter activity"/>
    <property type="evidence" value="ECO:0000315"/>
    <property type="project" value="UniProtKB"/>
</dbReference>
<dbReference type="GO" id="GO:0009734">
    <property type="term" value="P:auxin-activated signaling pathway"/>
    <property type="evidence" value="ECO:0007669"/>
    <property type="project" value="UniProtKB-KW"/>
</dbReference>
<dbReference type="GO" id="GO:0080162">
    <property type="term" value="P:endoplasmic reticulum to cytosol auxin transport"/>
    <property type="evidence" value="ECO:0007669"/>
    <property type="project" value="InterPro"/>
</dbReference>
<dbReference type="GO" id="GO:0140964">
    <property type="term" value="P:intracellular auxin homeostasis"/>
    <property type="evidence" value="ECO:0000314"/>
    <property type="project" value="UniProtKB"/>
</dbReference>
<dbReference type="GO" id="GO:0010311">
    <property type="term" value="P:lateral root formation"/>
    <property type="evidence" value="ECO:0000315"/>
    <property type="project" value="UniProtKB"/>
</dbReference>
<dbReference type="GO" id="GO:0040009">
    <property type="term" value="P:regulation of growth rate"/>
    <property type="evidence" value="ECO:0000315"/>
    <property type="project" value="UniProtKB"/>
</dbReference>
<dbReference type="GO" id="GO:0009733">
    <property type="term" value="P:response to auxin"/>
    <property type="evidence" value="ECO:0000270"/>
    <property type="project" value="UniProtKB"/>
</dbReference>
<dbReference type="InterPro" id="IPR004776">
    <property type="entry name" value="Mem_transp_PIN-like"/>
</dbReference>
<dbReference type="InterPro" id="IPR039305">
    <property type="entry name" value="PILS2/6"/>
</dbReference>
<dbReference type="PANTHER" id="PTHR31419">
    <property type="entry name" value="PROTEIN PIN-LIKES 2"/>
    <property type="match status" value="1"/>
</dbReference>
<dbReference type="PANTHER" id="PTHR31419:SF2">
    <property type="entry name" value="PROTEIN PIN-LIKES 2"/>
    <property type="match status" value="1"/>
</dbReference>
<dbReference type="Pfam" id="PF03547">
    <property type="entry name" value="Mem_trans"/>
    <property type="match status" value="1"/>
</dbReference>
<name>PILS2_ARATH</name>
<accession>Q9C999</accession>
<evidence type="ECO:0000255" key="1"/>
<evidence type="ECO:0000269" key="2">
    <source>
    </source>
</evidence>
<evidence type="ECO:0000303" key="3">
    <source>
    </source>
</evidence>
<evidence type="ECO:0000305" key="4"/>
<evidence type="ECO:0000305" key="5">
    <source>
    </source>
</evidence>
<evidence type="ECO:0000312" key="6">
    <source>
        <dbReference type="Araport" id="AT1G71090"/>
    </source>
</evidence>
<evidence type="ECO:0000312" key="7">
    <source>
        <dbReference type="EMBL" id="AAG51701.1"/>
    </source>
</evidence>
<comment type="function">
    <text evidence="2">Involved in cellular auxin homeostasis by regulating auxin metabolism. Regulates intracellular auxin accumulation at the endoplasmic reticulum and thus auxin availability for nuclear auxin signaling.</text>
</comment>
<comment type="subcellular location">
    <subcellularLocation>
        <location evidence="2">Endoplasmic reticulum membrane</location>
        <topology evidence="4">Multi-pass membrane protein</topology>
    </subcellularLocation>
</comment>
<comment type="tissue specificity">
    <text evidence="2">Expressed in seedlings, rosette and cauline leaves, flowers and siliques.</text>
</comment>
<comment type="induction">
    <text evidence="2">Up-regulated by auxin application.</text>
</comment>
<comment type="disruption phenotype">
    <text evidence="2">Increased root growth and lateral root initiation.</text>
</comment>
<comment type="similarity">
    <text evidence="4">Belongs to the auxin efflux carrier (TC 2.A.69.2) family.</text>
</comment>
<protein>
    <recommendedName>
        <fullName evidence="3">Protein PIN-LIKES 2</fullName>
    </recommendedName>
    <alternativeName>
        <fullName evidence="3">Auxin efflux carrier-like protein 2</fullName>
    </alternativeName>
</protein>
<keyword id="KW-0927">Auxin signaling pathway</keyword>
<keyword id="KW-0256">Endoplasmic reticulum</keyword>
<keyword id="KW-0472">Membrane</keyword>
<keyword id="KW-1185">Reference proteome</keyword>
<keyword id="KW-0812">Transmembrane</keyword>
<keyword id="KW-1133">Transmembrane helix</keyword>
<keyword id="KW-0813">Transport</keyword>
<sequence>MSGFSSGNVNSRVVDILSGVVPLLKLICLTVIGLLLAHPKTQLVPRATFRLLSKLVFALFLPCLIFTELGESITLDNIVQWWFIPVNVLLSAVVGSLIGYLVVLICRPPPEFNRFTIVMTAFGNTGNLLLAIVSSVCHTKTNPFGPNCNSRGVSYVSFAQWVAVILVYTVVYHMMEPPLEYYEVVEEEGVEIEEINVENHDASRPLLVEAEWPGIEDKETEHCKTPFIARVFNSISSFSQTSFPEVDLGGEYGGESSSPRSIQCLAEPRVMRRIRVVAEQTPVKHILQPPTIASLLAIIIGSVPQLKSVVFGYDAPLSFITDSLNIMGSAMVPSVMLVLGGMLSEGPNESTLGLRTTIGISVARLLVLPLVGIGIVMSADKLGLISSADPMFKFVLLLQYSTPSAILLGAIASLRGYAVREASALLFWQHIFALLSLTFYIVIFFKLTVETTVQGMQ</sequence>